<reference key="1">
    <citation type="journal article" date="2005" name="Nature">
        <title>Generation and annotation of the DNA sequences of human chromosomes 2 and 4.</title>
        <authorList>
            <person name="Hillier L.W."/>
            <person name="Graves T.A."/>
            <person name="Fulton R.S."/>
            <person name="Fulton L.A."/>
            <person name="Pepin K.H."/>
            <person name="Minx P."/>
            <person name="Wagner-McPherson C."/>
            <person name="Layman D."/>
            <person name="Wylie K."/>
            <person name="Sekhon M."/>
            <person name="Becker M.C."/>
            <person name="Fewell G.A."/>
            <person name="Delehaunty K.D."/>
            <person name="Miner T.L."/>
            <person name="Nash W.E."/>
            <person name="Kremitzki C."/>
            <person name="Oddy L."/>
            <person name="Du H."/>
            <person name="Sun H."/>
            <person name="Bradshaw-Cordum H."/>
            <person name="Ali J."/>
            <person name="Carter J."/>
            <person name="Cordes M."/>
            <person name="Harris A."/>
            <person name="Isak A."/>
            <person name="van Brunt A."/>
            <person name="Nguyen C."/>
            <person name="Du F."/>
            <person name="Courtney L."/>
            <person name="Kalicki J."/>
            <person name="Ozersky P."/>
            <person name="Abbott S."/>
            <person name="Armstrong J."/>
            <person name="Belter E.A."/>
            <person name="Caruso L."/>
            <person name="Cedroni M."/>
            <person name="Cotton M."/>
            <person name="Davidson T."/>
            <person name="Desai A."/>
            <person name="Elliott G."/>
            <person name="Erb T."/>
            <person name="Fronick C."/>
            <person name="Gaige T."/>
            <person name="Haakenson W."/>
            <person name="Haglund K."/>
            <person name="Holmes A."/>
            <person name="Harkins R."/>
            <person name="Kim K."/>
            <person name="Kruchowski S.S."/>
            <person name="Strong C.M."/>
            <person name="Grewal N."/>
            <person name="Goyea E."/>
            <person name="Hou S."/>
            <person name="Levy A."/>
            <person name="Martinka S."/>
            <person name="Mead K."/>
            <person name="McLellan M.D."/>
            <person name="Meyer R."/>
            <person name="Randall-Maher J."/>
            <person name="Tomlinson C."/>
            <person name="Dauphin-Kohlberg S."/>
            <person name="Kozlowicz-Reilly A."/>
            <person name="Shah N."/>
            <person name="Swearengen-Shahid S."/>
            <person name="Snider J."/>
            <person name="Strong J.T."/>
            <person name="Thompson J."/>
            <person name="Yoakum M."/>
            <person name="Leonard S."/>
            <person name="Pearman C."/>
            <person name="Trani L."/>
            <person name="Radionenko M."/>
            <person name="Waligorski J.E."/>
            <person name="Wang C."/>
            <person name="Rock S.M."/>
            <person name="Tin-Wollam A.-M."/>
            <person name="Maupin R."/>
            <person name="Latreille P."/>
            <person name="Wendl M.C."/>
            <person name="Yang S.-P."/>
            <person name="Pohl C."/>
            <person name="Wallis J.W."/>
            <person name="Spieth J."/>
            <person name="Bieri T.A."/>
            <person name="Berkowicz N."/>
            <person name="Nelson J.O."/>
            <person name="Osborne J."/>
            <person name="Ding L."/>
            <person name="Meyer R."/>
            <person name="Sabo A."/>
            <person name="Shotland Y."/>
            <person name="Sinha P."/>
            <person name="Wohldmann P.E."/>
            <person name="Cook L.L."/>
            <person name="Hickenbotham M.T."/>
            <person name="Eldred J."/>
            <person name="Williams D."/>
            <person name="Jones T.A."/>
            <person name="She X."/>
            <person name="Ciccarelli F.D."/>
            <person name="Izaurralde E."/>
            <person name="Taylor J."/>
            <person name="Schmutz J."/>
            <person name="Myers R.M."/>
            <person name="Cox D.R."/>
            <person name="Huang X."/>
            <person name="McPherson J.D."/>
            <person name="Mardis E.R."/>
            <person name="Clifton S.W."/>
            <person name="Warren W.C."/>
            <person name="Chinwalla A.T."/>
            <person name="Eddy S.R."/>
            <person name="Marra M.A."/>
            <person name="Ovcharenko I."/>
            <person name="Furey T.S."/>
            <person name="Miller W."/>
            <person name="Eichler E.E."/>
            <person name="Bork P."/>
            <person name="Suyama M."/>
            <person name="Torrents D."/>
            <person name="Waterston R.H."/>
            <person name="Wilson R.K."/>
        </authorList>
    </citation>
    <scope>NUCLEOTIDE SEQUENCE [LARGE SCALE GENOMIC DNA]</scope>
</reference>
<dbReference type="EC" id="3.4.19.12"/>
<dbReference type="EMBL" id="AC108519">
    <property type="status" value="NOT_ANNOTATED_CDS"/>
    <property type="molecule type" value="Genomic_DNA"/>
</dbReference>
<dbReference type="CCDS" id="CCDS59459.1"/>
<dbReference type="RefSeq" id="NP_001243788.1">
    <property type="nucleotide sequence ID" value="NM_001256859.1"/>
</dbReference>
<dbReference type="SMR" id="D6R9N7"/>
<dbReference type="BioGRID" id="939025">
    <property type="interactions" value="3"/>
</dbReference>
<dbReference type="FunCoup" id="D6R9N7">
    <property type="interactions" value="53"/>
</dbReference>
<dbReference type="IntAct" id="D6R9N7">
    <property type="interactions" value="1"/>
</dbReference>
<dbReference type="STRING" id="9606.ENSP00000423503"/>
<dbReference type="MEROPS" id="C19.A82"/>
<dbReference type="MEROPS" id="C19.A93"/>
<dbReference type="BioMuta" id="USP17L18"/>
<dbReference type="jPOST" id="D6R9N7"/>
<dbReference type="MassIVE" id="D6R9N7"/>
<dbReference type="PaxDb" id="9606-ENSP00000423503"/>
<dbReference type="Antibodypedia" id="77280">
    <property type="antibodies" value="3 antibodies from 1 providers"/>
</dbReference>
<dbReference type="DNASU" id="100287364"/>
<dbReference type="Ensembl" id="ENST00000504209.1">
    <property type="protein sequence ID" value="ENSP00000423503.1"/>
    <property type="gene ID" value="ENSG00000250844.3"/>
</dbReference>
<dbReference type="GeneID" id="100287364"/>
<dbReference type="KEGG" id="hsa:100287364"/>
<dbReference type="MANE-Select" id="ENST00000504209.1">
    <property type="protein sequence ID" value="ENSP00000423503.1"/>
    <property type="RefSeq nucleotide sequence ID" value="NM_001256859.1"/>
    <property type="RefSeq protein sequence ID" value="NP_001243788.1"/>
</dbReference>
<dbReference type="UCSC" id="uc011bwp.2">
    <property type="organism name" value="human"/>
</dbReference>
<dbReference type="AGR" id="HGNC:44446"/>
<dbReference type="CTD" id="100287364"/>
<dbReference type="GeneCards" id="USP17L18"/>
<dbReference type="HGNC" id="HGNC:44446">
    <property type="gene designation" value="USP17L18"/>
</dbReference>
<dbReference type="HPA" id="ENSG00000250844">
    <property type="expression patterns" value="Not detected"/>
</dbReference>
<dbReference type="neXtProt" id="NX_D6R9N7"/>
<dbReference type="VEuPathDB" id="HostDB:ENSG00000250844"/>
<dbReference type="eggNOG" id="KOG1865">
    <property type="taxonomic scope" value="Eukaryota"/>
</dbReference>
<dbReference type="GeneTree" id="ENSGT00940000161948"/>
<dbReference type="InParanoid" id="D6R9N7"/>
<dbReference type="OMA" id="MCKASQV"/>
<dbReference type="OrthoDB" id="8832at9604"/>
<dbReference type="PAN-GO" id="D6R9N7">
    <property type="GO annotations" value="6 GO annotations based on evolutionary models"/>
</dbReference>
<dbReference type="PhylomeDB" id="D6R9N7"/>
<dbReference type="TreeFam" id="TF315281"/>
<dbReference type="PathwayCommons" id="D6R9N7"/>
<dbReference type="Reactome" id="R-HSA-5689880">
    <property type="pathway name" value="Ub-specific processing proteases"/>
</dbReference>
<dbReference type="BioGRID-ORCS" id="100287364">
    <property type="hits" value="15 hits in 174 CRISPR screens"/>
</dbReference>
<dbReference type="GenomeRNAi" id="100287364"/>
<dbReference type="Pharos" id="D6R9N7">
    <property type="development level" value="Tdark"/>
</dbReference>
<dbReference type="PRO" id="PR:D6R9N7"/>
<dbReference type="Proteomes" id="UP000005640">
    <property type="component" value="Chromosome 4"/>
</dbReference>
<dbReference type="RNAct" id="D6R9N7">
    <property type="molecule type" value="protein"/>
</dbReference>
<dbReference type="Bgee" id="ENSG00000250844">
    <property type="expression patterns" value="Expressed in apex of heart and 2 other cell types or tissues"/>
</dbReference>
<dbReference type="GO" id="GO:0005829">
    <property type="term" value="C:cytosol"/>
    <property type="evidence" value="ECO:0000318"/>
    <property type="project" value="GO_Central"/>
</dbReference>
<dbReference type="GO" id="GO:0005783">
    <property type="term" value="C:endoplasmic reticulum"/>
    <property type="evidence" value="ECO:0007669"/>
    <property type="project" value="UniProtKB-SubCell"/>
</dbReference>
<dbReference type="GO" id="GO:0005634">
    <property type="term" value="C:nucleus"/>
    <property type="evidence" value="ECO:0000318"/>
    <property type="project" value="GO_Central"/>
</dbReference>
<dbReference type="GO" id="GO:0004843">
    <property type="term" value="F:cysteine-type deubiquitinase activity"/>
    <property type="evidence" value="ECO:0000318"/>
    <property type="project" value="GO_Central"/>
</dbReference>
<dbReference type="GO" id="GO:0016579">
    <property type="term" value="P:protein deubiquitination"/>
    <property type="evidence" value="ECO:0007669"/>
    <property type="project" value="InterPro"/>
</dbReference>
<dbReference type="GO" id="GO:0006508">
    <property type="term" value="P:proteolysis"/>
    <property type="evidence" value="ECO:0007669"/>
    <property type="project" value="UniProtKB-KW"/>
</dbReference>
<dbReference type="GO" id="GO:0042981">
    <property type="term" value="P:regulation of apoptotic process"/>
    <property type="evidence" value="ECO:0000318"/>
    <property type="project" value="GO_Central"/>
</dbReference>
<dbReference type="GO" id="GO:0031647">
    <property type="term" value="P:regulation of protein stability"/>
    <property type="evidence" value="ECO:0000318"/>
    <property type="project" value="GO_Central"/>
</dbReference>
<dbReference type="CDD" id="cd02661">
    <property type="entry name" value="Peptidase_C19E"/>
    <property type="match status" value="1"/>
</dbReference>
<dbReference type="FunFam" id="3.90.70.10:FF:000070">
    <property type="entry name" value="Ubiquitin carboxyl-terminal hydrolase 17-like protein 17"/>
    <property type="match status" value="1"/>
</dbReference>
<dbReference type="Gene3D" id="3.90.70.10">
    <property type="entry name" value="Cysteine proteinases"/>
    <property type="match status" value="1"/>
</dbReference>
<dbReference type="InterPro" id="IPR006861">
    <property type="entry name" value="HABP4_PAIRBP1-bd"/>
</dbReference>
<dbReference type="InterPro" id="IPR038765">
    <property type="entry name" value="Papain-like_cys_pep_sf"/>
</dbReference>
<dbReference type="InterPro" id="IPR050164">
    <property type="entry name" value="Peptidase_C19"/>
</dbReference>
<dbReference type="InterPro" id="IPR001394">
    <property type="entry name" value="Peptidase_C19_UCH"/>
</dbReference>
<dbReference type="InterPro" id="IPR018200">
    <property type="entry name" value="USP_CS"/>
</dbReference>
<dbReference type="InterPro" id="IPR028889">
    <property type="entry name" value="USP_dom"/>
</dbReference>
<dbReference type="PANTHER" id="PTHR24006:SF651">
    <property type="entry name" value="INACTIVE UBIQUITIN CARBOXYL-TERMINAL HYDROLASE 17-LIKE PROTEIN 4-RELATED"/>
    <property type="match status" value="1"/>
</dbReference>
<dbReference type="PANTHER" id="PTHR24006">
    <property type="entry name" value="UBIQUITIN CARBOXYL-TERMINAL HYDROLASE"/>
    <property type="match status" value="1"/>
</dbReference>
<dbReference type="Pfam" id="PF04774">
    <property type="entry name" value="HABP4_PAI-RBP1"/>
    <property type="match status" value="1"/>
</dbReference>
<dbReference type="Pfam" id="PF00443">
    <property type="entry name" value="UCH"/>
    <property type="match status" value="1"/>
</dbReference>
<dbReference type="SUPFAM" id="SSF54001">
    <property type="entry name" value="Cysteine proteinases"/>
    <property type="match status" value="1"/>
</dbReference>
<dbReference type="PROSITE" id="PS00972">
    <property type="entry name" value="USP_1"/>
    <property type="match status" value="1"/>
</dbReference>
<dbReference type="PROSITE" id="PS00973">
    <property type="entry name" value="USP_2"/>
    <property type="match status" value="1"/>
</dbReference>
<dbReference type="PROSITE" id="PS50235">
    <property type="entry name" value="USP_3"/>
    <property type="match status" value="1"/>
</dbReference>
<sequence length="530" mass="59657">MEDDSLYLGGEWQFNHFSKLTSSRPDAAFAEIQRTSLPEKSPLSCETRVDLCDDLAPVARQLAPREKLPLSSRRPAAVGAGLQNMGNTCYVNASLQCLTYTPPLANYMLSREHSQTCHRHKGCMLCTMQAHITRALHNPGHVIQPSQALAAGFHRGKQEDAHEFLMFTVDAMKKACLPGHKQVDHHSKDTTLIHQIFGGYWRSQIKCLHCHGISDTFDPYLDIALDIQAAQSVQQALEQLVKPEELNGENAYHCGVCLQRAPASKTLTLHTSAKVLILVLKRFSDVTGNKIAKNVQYPECLDMQPYMSQTNTGPLVYVLYAVLVHAGWSCHNGHYFSYVKAQEGQWYKMDDAEVTASSITSVLSQQAYVLFYIQKSEWERHSESVSRGREPRALGAEDTDRRAKQGELKRDHPCLQAPELDEHLVERATQESTLDHWKFLQEQNKTKPEFNVRKVEGTLPPDVLVIHQSKYKCGMKNHHPEQQSSLLNLSSTTPTHQESMNTGTLASLRGRARRSKGKNKHSKRALLVCQ</sequence>
<organism>
    <name type="scientific">Homo sapiens</name>
    <name type="common">Human</name>
    <dbReference type="NCBI Taxonomy" id="9606"/>
    <lineage>
        <taxon>Eukaryota</taxon>
        <taxon>Metazoa</taxon>
        <taxon>Chordata</taxon>
        <taxon>Craniata</taxon>
        <taxon>Vertebrata</taxon>
        <taxon>Euteleostomi</taxon>
        <taxon>Mammalia</taxon>
        <taxon>Eutheria</taxon>
        <taxon>Euarchontoglires</taxon>
        <taxon>Primates</taxon>
        <taxon>Haplorrhini</taxon>
        <taxon>Catarrhini</taxon>
        <taxon>Hominidae</taxon>
        <taxon>Homo</taxon>
    </lineage>
</organism>
<accession>D6R9N7</accession>
<proteinExistence type="inferred from homology"/>
<evidence type="ECO:0000250" key="1"/>
<evidence type="ECO:0000255" key="2">
    <source>
        <dbReference type="PROSITE-ProRule" id="PRU10092"/>
    </source>
</evidence>
<evidence type="ECO:0000255" key="3">
    <source>
        <dbReference type="PROSITE-ProRule" id="PRU10093"/>
    </source>
</evidence>
<evidence type="ECO:0000256" key="4">
    <source>
        <dbReference type="SAM" id="MobiDB-lite"/>
    </source>
</evidence>
<evidence type="ECO:0000305" key="5"/>
<protein>
    <recommendedName>
        <fullName>Ubiquitin carboxyl-terminal hydrolase 17-like protein 18</fullName>
        <ecNumber>3.4.19.12</ecNumber>
    </recommendedName>
</protein>
<gene>
    <name type="primary">USP17L18</name>
</gene>
<feature type="chain" id="PRO_0000421092" description="Ubiquitin carboxyl-terminal hydrolase 17-like protein 18">
    <location>
        <begin position="1"/>
        <end position="530"/>
    </location>
</feature>
<feature type="domain" description="USP">
    <location>
        <begin position="80"/>
        <end position="375"/>
    </location>
</feature>
<feature type="region of interest" description="Disordered" evidence="4">
    <location>
        <begin position="382"/>
        <end position="414"/>
    </location>
</feature>
<feature type="region of interest" description="Disordered" evidence="4">
    <location>
        <begin position="509"/>
        <end position="530"/>
    </location>
</feature>
<feature type="compositionally biased region" description="Basic and acidic residues" evidence="4">
    <location>
        <begin position="382"/>
        <end position="392"/>
    </location>
</feature>
<feature type="compositionally biased region" description="Basic and acidic residues" evidence="4">
    <location>
        <begin position="398"/>
        <end position="413"/>
    </location>
</feature>
<feature type="compositionally biased region" description="Basic residues" evidence="4">
    <location>
        <begin position="510"/>
        <end position="524"/>
    </location>
</feature>
<feature type="active site" description="Nucleophile" evidence="2 3">
    <location>
        <position position="89"/>
    </location>
</feature>
<feature type="active site" description="Proton acceptor" evidence="2 3">
    <location>
        <position position="334"/>
    </location>
</feature>
<keyword id="KW-0256">Endoplasmic reticulum</keyword>
<keyword id="KW-0378">Hydrolase</keyword>
<keyword id="KW-0539">Nucleus</keyword>
<keyword id="KW-0645">Protease</keyword>
<keyword id="KW-1185">Reference proteome</keyword>
<keyword id="KW-0788">Thiol protease</keyword>
<keyword id="KW-0833">Ubl conjugation pathway</keyword>
<comment type="function">
    <text evidence="1">Deubiquitinating enzyme that removes conjugated ubiquitin from specific proteins to regulate different cellular processes that may include cell proliferation, progression through the cell cycle, apoptosis, cell migration, and the cellular response to viral infection.</text>
</comment>
<comment type="catalytic activity">
    <reaction>
        <text>Thiol-dependent hydrolysis of ester, thioester, amide, peptide and isopeptide bonds formed by the C-terminal Gly of ubiquitin (a 76-residue protein attached to proteins as an intracellular targeting signal).</text>
        <dbReference type="EC" id="3.4.19.12"/>
    </reaction>
</comment>
<comment type="subcellular location">
    <subcellularLocation>
        <location evidence="1">Nucleus</location>
    </subcellularLocation>
    <subcellularLocation>
        <location evidence="1">Endoplasmic reticulum</location>
    </subcellularLocation>
</comment>
<comment type="similarity">
    <text evidence="5">Belongs to the peptidase C19 family. USP17 subfamily.</text>
</comment>
<comment type="caution">
    <text evidence="5">The RS447 megasatellite DNA is a highly polymorphic conserved tandem repetitive sequence which contains a copy of the USP17 gene. It is present with an interindividual variation in copy number, ranging from 20 to 103, and can be found in the genome on chromosome 4 and chromosome 8. The high similarity between the UPS17-like genes makes it impossible to specifically assign data to a particular gene of the family. Oligonucleotides designed in RNAi experiments are for instance not specific for a given UPS17-like gene.</text>
</comment>
<name>U17LI_HUMAN</name>